<gene>
    <name type="primary">RHBDL1</name>
    <name type="synonym">RHBDL</name>
</gene>
<dbReference type="EC" id="3.4.21.105"/>
<dbReference type="EMBL" id="Y17108">
    <property type="protein sequence ID" value="CAA76629.1"/>
    <property type="molecule type" value="mRNA"/>
</dbReference>
<dbReference type="EMBL" id="AJ272344">
    <property type="protein sequence ID" value="CAC00640.1"/>
    <property type="molecule type" value="mRNA"/>
</dbReference>
<dbReference type="EMBL" id="AE006464">
    <property type="protein sequence ID" value="AAK61241.1"/>
    <property type="molecule type" value="Genomic_DNA"/>
</dbReference>
<dbReference type="EMBL" id="Z92544">
    <property type="status" value="NOT_ANNOTATED_CDS"/>
    <property type="molecule type" value="Genomic_DNA"/>
</dbReference>
<dbReference type="EMBL" id="CH471112">
    <property type="protein sequence ID" value="EAW85760.1"/>
    <property type="molecule type" value="Genomic_DNA"/>
</dbReference>
<dbReference type="EMBL" id="BC120874">
    <property type="protein sequence ID" value="AAI20875.1"/>
    <property type="molecule type" value="mRNA"/>
</dbReference>
<dbReference type="EMBL" id="BC120875">
    <property type="protein sequence ID" value="AAI20876.1"/>
    <property type="molecule type" value="mRNA"/>
</dbReference>
<dbReference type="CCDS" id="CCDS10418.1">
    <molecule id="O75783-1"/>
</dbReference>
<dbReference type="CCDS" id="CCDS61779.1">
    <molecule id="O75783-2"/>
</dbReference>
<dbReference type="RefSeq" id="NP_001265649.1">
    <molecule id="O75783-2"/>
    <property type="nucleotide sequence ID" value="NM_001278720.2"/>
</dbReference>
<dbReference type="RefSeq" id="NP_001265650.1">
    <property type="nucleotide sequence ID" value="NM_001278721.1"/>
</dbReference>
<dbReference type="RefSeq" id="NP_001305662.1">
    <molecule id="O75783-1"/>
    <property type="nucleotide sequence ID" value="NM_001318733.2"/>
</dbReference>
<dbReference type="SMR" id="O75783"/>
<dbReference type="BioGRID" id="114495">
    <property type="interactions" value="18"/>
</dbReference>
<dbReference type="FunCoup" id="O75783">
    <property type="interactions" value="211"/>
</dbReference>
<dbReference type="IntAct" id="O75783">
    <property type="interactions" value="16"/>
</dbReference>
<dbReference type="STRING" id="9606.ENSP00000219551"/>
<dbReference type="MEROPS" id="S54.005"/>
<dbReference type="iPTMnet" id="O75783"/>
<dbReference type="PhosphoSitePlus" id="O75783"/>
<dbReference type="BioMuta" id="RHBDL1"/>
<dbReference type="MassIVE" id="O75783"/>
<dbReference type="PaxDb" id="9606-ENSP00000344206"/>
<dbReference type="PeptideAtlas" id="O75783"/>
<dbReference type="ProteomicsDB" id="50193">
    <molecule id="O75783-1"/>
</dbReference>
<dbReference type="ProteomicsDB" id="50194">
    <molecule id="O75783-2"/>
</dbReference>
<dbReference type="Antibodypedia" id="22802">
    <property type="antibodies" value="33 antibodies from 14 providers"/>
</dbReference>
<dbReference type="DNASU" id="9028"/>
<dbReference type="Ensembl" id="ENST00000219551.2">
    <molecule id="O75783-1"/>
    <property type="protein sequence ID" value="ENSP00000219551.2"/>
    <property type="gene ID" value="ENSG00000103269.14"/>
</dbReference>
<dbReference type="Ensembl" id="ENST00000352681.8">
    <molecule id="O75783-2"/>
    <property type="protein sequence ID" value="ENSP00000344206.3"/>
    <property type="gene ID" value="ENSG00000103269.14"/>
</dbReference>
<dbReference type="GeneID" id="9028"/>
<dbReference type="KEGG" id="hsa:9028"/>
<dbReference type="MANE-Select" id="ENST00000352681.8">
    <molecule id="O75783-2"/>
    <property type="protein sequence ID" value="ENSP00000344206.3"/>
    <property type="RefSeq nucleotide sequence ID" value="NM_001278720.2"/>
    <property type="RefSeq protein sequence ID" value="NP_001265649.1"/>
</dbReference>
<dbReference type="UCSC" id="uc002cir.2">
    <molecule id="O75783-1"/>
    <property type="organism name" value="human"/>
</dbReference>
<dbReference type="AGR" id="HGNC:10007"/>
<dbReference type="CTD" id="9028"/>
<dbReference type="DisGeNET" id="9028"/>
<dbReference type="GeneCards" id="RHBDL1"/>
<dbReference type="HGNC" id="HGNC:10007">
    <property type="gene designation" value="RHBDL1"/>
</dbReference>
<dbReference type="HPA" id="ENSG00000103269">
    <property type="expression patterns" value="Tissue enriched (brain)"/>
</dbReference>
<dbReference type="MIM" id="603264">
    <property type="type" value="gene"/>
</dbReference>
<dbReference type="neXtProt" id="NX_O75783"/>
<dbReference type="OpenTargets" id="ENSG00000103269"/>
<dbReference type="PharmGKB" id="PA34382"/>
<dbReference type="VEuPathDB" id="HostDB:ENSG00000103269"/>
<dbReference type="eggNOG" id="KOG2289">
    <property type="taxonomic scope" value="Eukaryota"/>
</dbReference>
<dbReference type="GeneTree" id="ENSGT00940000160651"/>
<dbReference type="HOGENOM" id="CLU_048023_2_1_1"/>
<dbReference type="InParanoid" id="O75783"/>
<dbReference type="OMA" id="EEGQICY"/>
<dbReference type="OrthoDB" id="418595at2759"/>
<dbReference type="PAN-GO" id="O75783">
    <property type="GO annotations" value="1 GO annotation based on evolutionary models"/>
</dbReference>
<dbReference type="PhylomeDB" id="O75783"/>
<dbReference type="TreeFam" id="TF313540"/>
<dbReference type="PathwayCommons" id="O75783"/>
<dbReference type="SignaLink" id="O75783"/>
<dbReference type="BioGRID-ORCS" id="9028">
    <property type="hits" value="13 hits in 1027 CRISPR screens"/>
</dbReference>
<dbReference type="GenomeRNAi" id="9028"/>
<dbReference type="Pharos" id="O75783">
    <property type="development level" value="Tdark"/>
</dbReference>
<dbReference type="PRO" id="PR:O75783"/>
<dbReference type="Proteomes" id="UP000005640">
    <property type="component" value="Chromosome 16"/>
</dbReference>
<dbReference type="RNAct" id="O75783">
    <property type="molecule type" value="protein"/>
</dbReference>
<dbReference type="Bgee" id="ENSG00000103269">
    <property type="expression patterns" value="Expressed in right hemisphere of cerebellum and 95 other cell types or tissues"/>
</dbReference>
<dbReference type="ExpressionAtlas" id="O75783">
    <property type="expression patterns" value="baseline and differential"/>
</dbReference>
<dbReference type="GO" id="GO:0016020">
    <property type="term" value="C:membrane"/>
    <property type="evidence" value="ECO:0000304"/>
    <property type="project" value="ProtInc"/>
</dbReference>
<dbReference type="GO" id="GO:0005886">
    <property type="term" value="C:plasma membrane"/>
    <property type="evidence" value="ECO:0000304"/>
    <property type="project" value="ProtInc"/>
</dbReference>
<dbReference type="GO" id="GO:0004252">
    <property type="term" value="F:serine-type endopeptidase activity"/>
    <property type="evidence" value="ECO:0000318"/>
    <property type="project" value="GO_Central"/>
</dbReference>
<dbReference type="GO" id="GO:0006508">
    <property type="term" value="P:proteolysis"/>
    <property type="evidence" value="ECO:0007669"/>
    <property type="project" value="UniProtKB-KW"/>
</dbReference>
<dbReference type="GO" id="GO:0007165">
    <property type="term" value="P:signal transduction"/>
    <property type="evidence" value="ECO:0000304"/>
    <property type="project" value="ProtInc"/>
</dbReference>
<dbReference type="FunFam" id="1.20.1540.10:FF:000006">
    <property type="entry name" value="rhomboid-related protein 1 isoform X1"/>
    <property type="match status" value="1"/>
</dbReference>
<dbReference type="Gene3D" id="1.10.238.10">
    <property type="entry name" value="EF-hand"/>
    <property type="match status" value="1"/>
</dbReference>
<dbReference type="Gene3D" id="1.20.1540.10">
    <property type="entry name" value="Rhomboid-like"/>
    <property type="match status" value="1"/>
</dbReference>
<dbReference type="InterPro" id="IPR011992">
    <property type="entry name" value="EF-hand-dom_pair"/>
</dbReference>
<dbReference type="InterPro" id="IPR022764">
    <property type="entry name" value="Peptidase_S54_rhomboid_dom"/>
</dbReference>
<dbReference type="InterPro" id="IPR035952">
    <property type="entry name" value="Rhomboid-like_sf"/>
</dbReference>
<dbReference type="InterPro" id="IPR051739">
    <property type="entry name" value="Rhomboid_IM_Serine_Proteases"/>
</dbReference>
<dbReference type="PANTHER" id="PTHR45840">
    <property type="entry name" value="RHOMBOID-RELATED PROTEIN"/>
    <property type="match status" value="1"/>
</dbReference>
<dbReference type="PANTHER" id="PTHR45840:SF4">
    <property type="entry name" value="RHOMBOID-RELATED PROTEIN 1"/>
    <property type="match status" value="1"/>
</dbReference>
<dbReference type="Pfam" id="PF01694">
    <property type="entry name" value="Rhomboid"/>
    <property type="match status" value="1"/>
</dbReference>
<dbReference type="SUPFAM" id="SSF47473">
    <property type="entry name" value="EF-hand"/>
    <property type="match status" value="1"/>
</dbReference>
<dbReference type="SUPFAM" id="SSF144091">
    <property type="entry name" value="Rhomboid-like"/>
    <property type="match status" value="1"/>
</dbReference>
<comment type="function">
    <text evidence="1">May be involved in regulated intramembrane proteolysis and the subsequent release of functional polypeptides from their membrane anchors.</text>
</comment>
<comment type="catalytic activity">
    <reaction>
        <text>Cleaves type-1 transmembrane domains using a catalytic dyad composed of serine and histidine that are contributed by different transmembrane domains.</text>
        <dbReference type="EC" id="3.4.21.105"/>
    </reaction>
</comment>
<comment type="interaction">
    <interactant intactId="EBI-12104986">
        <id>O75783</id>
    </interactant>
    <interactant intactId="EBI-348517">
        <id>O95870</id>
        <label>ABHD16A</label>
    </interactant>
    <organismsDiffer>false</organismsDiffer>
    <experiments>3</experiments>
</comment>
<comment type="interaction">
    <interactant intactId="EBI-12104986">
        <id>O75783</id>
    </interactant>
    <interactant intactId="EBI-715495">
        <id>P05090</id>
        <label>APOD</label>
    </interactant>
    <organismsDiffer>false</organismsDiffer>
    <experiments>3</experiments>
</comment>
<comment type="interaction">
    <interactant intactId="EBI-12104986">
        <id>O75783</id>
    </interactant>
    <interactant intactId="EBI-12003442">
        <id>Q8WVX3-2</id>
        <label>C4orf3</label>
    </interactant>
    <organismsDiffer>false</organismsDiffer>
    <experiments>3</experiments>
</comment>
<comment type="interaction">
    <interactant intactId="EBI-12104986">
        <id>O75783</id>
    </interactant>
    <interactant intactId="EBI-372265">
        <id>P21964</id>
        <label>COMT</label>
    </interactant>
    <organismsDiffer>false</organismsDiffer>
    <experiments>3</experiments>
</comment>
<comment type="interaction">
    <interactant intactId="EBI-12104986">
        <id>O75783</id>
    </interactant>
    <interactant intactId="EBI-713304">
        <id>Q9H0Q3</id>
        <label>FXYD6</label>
    </interactant>
    <organismsDiffer>false</organismsDiffer>
    <experiments>3</experiments>
</comment>
<comment type="interaction">
    <interactant intactId="EBI-12104986">
        <id>O75783</id>
    </interactant>
    <interactant intactId="EBI-10171774">
        <id>P60410</id>
        <label>KRTAP10-8</label>
    </interactant>
    <organismsDiffer>false</organismsDiffer>
    <experiments>3</experiments>
</comment>
<comment type="interaction">
    <interactant intactId="EBI-12104986">
        <id>O75783</id>
    </interactant>
    <interactant intactId="EBI-14065470">
        <id>Q9BYR9</id>
        <label>KRTAP2-4</label>
    </interactant>
    <organismsDiffer>false</organismsDiffer>
    <experiments>3</experiments>
</comment>
<comment type="interaction">
    <interactant intactId="EBI-12104986">
        <id>O75783</id>
    </interactant>
    <interactant intactId="EBI-22311199">
        <id>Q3LI67</id>
        <label>KRTAP6-3</label>
    </interactant>
    <organismsDiffer>false</organismsDiffer>
    <experiments>3</experiments>
</comment>
<comment type="interaction">
    <interactant intactId="EBI-12104986">
        <id>O75783</id>
    </interactant>
    <interactant intactId="EBI-11956541">
        <id>Q9GZY8-5</id>
        <label>MFF</label>
    </interactant>
    <organismsDiffer>false</organismsDiffer>
    <experiments>3</experiments>
</comment>
<comment type="interaction">
    <interactant intactId="EBI-12104986">
        <id>O75783</id>
    </interactant>
    <interactant intactId="EBI-723396">
        <id>Q969W0</id>
        <label>SPTSSA</label>
    </interactant>
    <organismsDiffer>false</organismsDiffer>
    <experiments>3</experiments>
</comment>
<comment type="interaction">
    <interactant intactId="EBI-12104986">
        <id>O75783</id>
    </interactant>
    <interactant intactId="EBI-11988865">
        <id>A5PKU2</id>
        <label>TUSC5</label>
    </interactant>
    <organismsDiffer>false</organismsDiffer>
    <experiments>3</experiments>
</comment>
<comment type="interaction">
    <interactant intactId="EBI-12104986">
        <id>O75783</id>
    </interactant>
    <interactant intactId="EBI-2107455">
        <id>Q08AM6</id>
        <label>VAC14</label>
    </interactant>
    <organismsDiffer>false</organismsDiffer>
    <experiments>3</experiments>
</comment>
<comment type="subcellular location">
    <subcellularLocation>
        <location>Membrane</location>
        <topology>Multi-pass membrane protein</topology>
    </subcellularLocation>
</comment>
<comment type="alternative products">
    <event type="alternative splicing"/>
    <isoform>
        <id>O75783-1</id>
        <name>1</name>
        <sequence type="displayed"/>
    </isoform>
    <isoform>
        <id>O75783-2</id>
        <name>2</name>
        <sequence type="described" ref="VSP_005372"/>
    </isoform>
</comment>
<comment type="tissue specificity">
    <text>Detected in heart, brain, skeletal muscle and kidney.</text>
</comment>
<comment type="similarity">
    <text evidence="5">Belongs to the peptidase S54 family.</text>
</comment>
<reference key="1">
    <citation type="journal article" date="1998" name="FEBS Lett.">
        <title>Characterization of a mammalian cDNA encoding a protein with high sequence similarity to the Drosophila regulatory protein Rhomboid.</title>
        <authorList>
            <person name="Pascall J.C."/>
            <person name="Brown K.D."/>
        </authorList>
    </citation>
    <scope>NUCLEOTIDE SEQUENCE [MRNA] (ISOFORMS 1 AND 2)</scope>
    <source>
        <tissue>Leukemia</tissue>
    </source>
</reference>
<reference key="2">
    <citation type="journal article" date="2001" name="Hum. Mol. Genet.">
        <title>Sequence, structure and pathology of the fully annotated terminal 2 Mb of the short arm of human chromosome 16.</title>
        <authorList>
            <person name="Daniels R.J."/>
            <person name="Peden J.F."/>
            <person name="Lloyd C."/>
            <person name="Horsley S.W."/>
            <person name="Clark K."/>
            <person name="Tufarelli C."/>
            <person name="Kearney L."/>
            <person name="Buckle V.J."/>
            <person name="Doggett N.A."/>
            <person name="Flint J."/>
            <person name="Higgs D.R."/>
        </authorList>
    </citation>
    <scope>NUCLEOTIDE SEQUENCE [LARGE SCALE GENOMIC DNA] (ISOFORM 1)</scope>
</reference>
<reference key="3">
    <citation type="submission" date="2005-09" db="EMBL/GenBank/DDBJ databases">
        <authorList>
            <person name="Mural R.J."/>
            <person name="Istrail S."/>
            <person name="Sutton G.G."/>
            <person name="Florea L."/>
            <person name="Halpern A.L."/>
            <person name="Mobarry C.M."/>
            <person name="Lippert R."/>
            <person name="Walenz B."/>
            <person name="Shatkay H."/>
            <person name="Dew I."/>
            <person name="Miller J.R."/>
            <person name="Flanigan M.J."/>
            <person name="Edwards N.J."/>
            <person name="Bolanos R."/>
            <person name="Fasulo D."/>
            <person name="Halldorsson B.V."/>
            <person name="Hannenhalli S."/>
            <person name="Turner R."/>
            <person name="Yooseph S."/>
            <person name="Lu F."/>
            <person name="Nusskern D.R."/>
            <person name="Shue B.C."/>
            <person name="Zheng X.H."/>
            <person name="Zhong F."/>
            <person name="Delcher A.L."/>
            <person name="Huson D.H."/>
            <person name="Kravitz S.A."/>
            <person name="Mouchard L."/>
            <person name="Reinert K."/>
            <person name="Remington K.A."/>
            <person name="Clark A.G."/>
            <person name="Waterman M.S."/>
            <person name="Eichler E.E."/>
            <person name="Adams M.D."/>
            <person name="Hunkapiller M.W."/>
            <person name="Myers E.W."/>
            <person name="Venter J.C."/>
        </authorList>
    </citation>
    <scope>NUCLEOTIDE SEQUENCE [LARGE SCALE GENOMIC DNA]</scope>
</reference>
<reference key="4">
    <citation type="journal article" date="2004" name="Nature">
        <title>The sequence and analysis of duplication-rich human chromosome 16.</title>
        <authorList>
            <person name="Martin J."/>
            <person name="Han C."/>
            <person name="Gordon L.A."/>
            <person name="Terry A."/>
            <person name="Prabhakar S."/>
            <person name="She X."/>
            <person name="Xie G."/>
            <person name="Hellsten U."/>
            <person name="Chan Y.M."/>
            <person name="Altherr M."/>
            <person name="Couronne O."/>
            <person name="Aerts A."/>
            <person name="Bajorek E."/>
            <person name="Black S."/>
            <person name="Blumer H."/>
            <person name="Branscomb E."/>
            <person name="Brown N.C."/>
            <person name="Bruno W.J."/>
            <person name="Buckingham J.M."/>
            <person name="Callen D.F."/>
            <person name="Campbell C.S."/>
            <person name="Campbell M.L."/>
            <person name="Campbell E.W."/>
            <person name="Caoile C."/>
            <person name="Challacombe J.F."/>
            <person name="Chasteen L.A."/>
            <person name="Chertkov O."/>
            <person name="Chi H.C."/>
            <person name="Christensen M."/>
            <person name="Clark L.M."/>
            <person name="Cohn J.D."/>
            <person name="Denys M."/>
            <person name="Detter J.C."/>
            <person name="Dickson M."/>
            <person name="Dimitrijevic-Bussod M."/>
            <person name="Escobar J."/>
            <person name="Fawcett J.J."/>
            <person name="Flowers D."/>
            <person name="Fotopulos D."/>
            <person name="Glavina T."/>
            <person name="Gomez M."/>
            <person name="Gonzales E."/>
            <person name="Goodstein D."/>
            <person name="Goodwin L.A."/>
            <person name="Grady D.L."/>
            <person name="Grigoriev I."/>
            <person name="Groza M."/>
            <person name="Hammon N."/>
            <person name="Hawkins T."/>
            <person name="Haydu L."/>
            <person name="Hildebrand C.E."/>
            <person name="Huang W."/>
            <person name="Israni S."/>
            <person name="Jett J."/>
            <person name="Jewett P.B."/>
            <person name="Kadner K."/>
            <person name="Kimball H."/>
            <person name="Kobayashi A."/>
            <person name="Krawczyk M.-C."/>
            <person name="Leyba T."/>
            <person name="Longmire J.L."/>
            <person name="Lopez F."/>
            <person name="Lou Y."/>
            <person name="Lowry S."/>
            <person name="Ludeman T."/>
            <person name="Manohar C.F."/>
            <person name="Mark G.A."/>
            <person name="McMurray K.L."/>
            <person name="Meincke L.J."/>
            <person name="Morgan J."/>
            <person name="Moyzis R.K."/>
            <person name="Mundt M.O."/>
            <person name="Munk A.C."/>
            <person name="Nandkeshwar R.D."/>
            <person name="Pitluck S."/>
            <person name="Pollard M."/>
            <person name="Predki P."/>
            <person name="Parson-Quintana B."/>
            <person name="Ramirez L."/>
            <person name="Rash S."/>
            <person name="Retterer J."/>
            <person name="Ricke D.O."/>
            <person name="Robinson D.L."/>
            <person name="Rodriguez A."/>
            <person name="Salamov A."/>
            <person name="Saunders E.H."/>
            <person name="Scott D."/>
            <person name="Shough T."/>
            <person name="Stallings R.L."/>
            <person name="Stalvey M."/>
            <person name="Sutherland R.D."/>
            <person name="Tapia R."/>
            <person name="Tesmer J.G."/>
            <person name="Thayer N."/>
            <person name="Thompson L.S."/>
            <person name="Tice H."/>
            <person name="Torney D.C."/>
            <person name="Tran-Gyamfi M."/>
            <person name="Tsai M."/>
            <person name="Ulanovsky L.E."/>
            <person name="Ustaszewska A."/>
            <person name="Vo N."/>
            <person name="White P.S."/>
            <person name="Williams A.L."/>
            <person name="Wills P.L."/>
            <person name="Wu J.-R."/>
            <person name="Wu K."/>
            <person name="Yang J."/>
            <person name="DeJong P."/>
            <person name="Bruce D."/>
            <person name="Doggett N.A."/>
            <person name="Deaven L."/>
            <person name="Schmutz J."/>
            <person name="Grimwood J."/>
            <person name="Richardson P."/>
            <person name="Rokhsar D.S."/>
            <person name="Eichler E.E."/>
            <person name="Gilna P."/>
            <person name="Lucas S.M."/>
            <person name="Myers R.M."/>
            <person name="Rubin E.M."/>
            <person name="Pennacchio L.A."/>
        </authorList>
    </citation>
    <scope>NUCLEOTIDE SEQUENCE [LARGE SCALE GENOMIC DNA]</scope>
</reference>
<reference key="5">
    <citation type="journal article" date="2004" name="Genome Res.">
        <title>The status, quality, and expansion of the NIH full-length cDNA project: the Mammalian Gene Collection (MGC).</title>
        <authorList>
            <consortium name="The MGC Project Team"/>
        </authorList>
    </citation>
    <scope>NUCLEOTIDE SEQUENCE [LARGE SCALE MRNA] (ISOFORM 1)</scope>
</reference>
<accession>O75783</accession>
<accession>A2IDC0</accession>
<accession>A2IDC1</accession>
<accession>Q0VAX4</accession>
<accession>Q9NQ85</accession>
<sequence length="438" mass="48314">MGRVEDGGTTEELEDWDPGTSALPAPGIKQGPREQTGTGPLSQKCWEPEPDAPSQPGPALWSRGRARTQALAGGSSLQQLDPENTGFIGADTFTGLVHSHELPLDPAKLDMLVALAQSNEQGQVCYQELVDLISSKRSSSFKRAIANGQRALPRDGPLDEPGLGVYKRFVRYVAYEILPCEVDRRWYFYRHRSCPPPVFMASVTLAQIIVFLCYGARLNKWVLQTYHPEYMKSPLVYHPGHRARAWRFLTYMFMHVGLEQLGFNALLQLMIGVPLEMVHGLLRISLLYLAGVLAGSLTVSITDMRAPVVGGSGGVYALCSAHLANVVMNWAGMRCPYKLLRMVLALVCMSSEVGRAVWLRFSPPLPASGPQPSFMAHLAGAVVGVSMGLTILRSYEERLRDQCGWWVVLLAYGTFLLFAVFWNVFAYDLLGAHIPPPP</sequence>
<proteinExistence type="evidence at protein level"/>
<protein>
    <recommendedName>
        <fullName>Rhomboid-related protein 1</fullName>
        <shortName>RRP</shortName>
        <ecNumber>3.4.21.105</ecNumber>
    </recommendedName>
    <alternativeName>
        <fullName>Rhomboid-like protein 1</fullName>
    </alternativeName>
</protein>
<evidence type="ECO:0000250" key="1"/>
<evidence type="ECO:0000255" key="2"/>
<evidence type="ECO:0000256" key="3">
    <source>
        <dbReference type="SAM" id="MobiDB-lite"/>
    </source>
</evidence>
<evidence type="ECO:0000303" key="4">
    <source>
    </source>
</evidence>
<evidence type="ECO:0000305" key="5"/>
<keyword id="KW-0025">Alternative splicing</keyword>
<keyword id="KW-0378">Hydrolase</keyword>
<keyword id="KW-0472">Membrane</keyword>
<keyword id="KW-0645">Protease</keyword>
<keyword id="KW-1267">Proteomics identification</keyword>
<keyword id="KW-1185">Reference proteome</keyword>
<keyword id="KW-0720">Serine protease</keyword>
<keyword id="KW-0812">Transmembrane</keyword>
<keyword id="KW-1133">Transmembrane helix</keyword>
<feature type="chain" id="PRO_0000206173" description="Rhomboid-related protein 1">
    <location>
        <begin position="1"/>
        <end position="438"/>
    </location>
</feature>
<feature type="transmembrane region" description="Helical" evidence="2">
    <location>
        <begin position="196"/>
        <end position="216"/>
    </location>
</feature>
<feature type="transmembrane region" description="Helical" evidence="2">
    <location>
        <begin position="262"/>
        <end position="282"/>
    </location>
</feature>
<feature type="transmembrane region" description="Helical" evidence="2">
    <location>
        <begin position="284"/>
        <end position="304"/>
    </location>
</feature>
<feature type="transmembrane region" description="Helical" evidence="2">
    <location>
        <begin position="308"/>
        <end position="328"/>
    </location>
</feature>
<feature type="transmembrane region" description="Helical" evidence="2">
    <location>
        <begin position="340"/>
        <end position="359"/>
    </location>
</feature>
<feature type="transmembrane region" description="Helical" evidence="2">
    <location>
        <begin position="372"/>
        <end position="392"/>
    </location>
</feature>
<feature type="transmembrane region" description="Helical" evidence="2">
    <location>
        <begin position="405"/>
        <end position="425"/>
    </location>
</feature>
<feature type="region of interest" description="Disordered" evidence="3">
    <location>
        <begin position="1"/>
        <end position="62"/>
    </location>
</feature>
<feature type="compositionally biased region" description="Acidic residues" evidence="3">
    <location>
        <begin position="8"/>
        <end position="17"/>
    </location>
</feature>
<feature type="active site" description="Nucleophile" evidence="1">
    <location>
        <position position="312"/>
    </location>
</feature>
<feature type="active site" evidence="1">
    <location>
        <position position="377"/>
    </location>
</feature>
<feature type="splice variant" id="VSP_005372" description="In isoform 2." evidence="4">
    <original>MGRVEDGGTTEELEDWDPGTSALPAPGIKQGPREQTGTGPLSQKCWEPEPDAPSQPGPALWSRGRARTQALAGGSSL</original>
    <variation>MDRSSLLQLIQE</variation>
    <location>
        <begin position="1"/>
        <end position="77"/>
    </location>
</feature>
<organism>
    <name type="scientific">Homo sapiens</name>
    <name type="common">Human</name>
    <dbReference type="NCBI Taxonomy" id="9606"/>
    <lineage>
        <taxon>Eukaryota</taxon>
        <taxon>Metazoa</taxon>
        <taxon>Chordata</taxon>
        <taxon>Craniata</taxon>
        <taxon>Vertebrata</taxon>
        <taxon>Euteleostomi</taxon>
        <taxon>Mammalia</taxon>
        <taxon>Eutheria</taxon>
        <taxon>Euarchontoglires</taxon>
        <taxon>Primates</taxon>
        <taxon>Haplorrhini</taxon>
        <taxon>Catarrhini</taxon>
        <taxon>Hominidae</taxon>
        <taxon>Homo</taxon>
    </lineage>
</organism>
<name>RHBL1_HUMAN</name>